<name>HEXA_CAEEL</name>
<keyword id="KW-0325">Glycoprotein</keyword>
<keyword id="KW-0326">Glycosidase</keyword>
<keyword id="KW-0378">Hydrolase</keyword>
<keyword id="KW-0458">Lysosome</keyword>
<keyword id="KW-1185">Reference proteome</keyword>
<keyword id="KW-0732">Signal</keyword>
<reference key="1">
    <citation type="journal article" date="2007" name="J. Biol. Chem.">
        <title>Biosynthesis of truncated N-linked oligosaccharides results from non-orthologous hexosaminidase-mediated mechanisms in nematodes, plants, and insects.</title>
        <authorList>
            <person name="Gutternigg M."/>
            <person name="Kretschmer-Lubich D."/>
            <person name="Paschinger K."/>
            <person name="Rendic D."/>
            <person name="Hader J."/>
            <person name="Geier P."/>
            <person name="Ranftl R."/>
            <person name="Jantsch V."/>
            <person name="Lochnit G."/>
            <person name="Wilson I.B.H."/>
        </authorList>
    </citation>
    <scope>NUCLEOTIDE SEQUENCE [MRNA]</scope>
    <scope>FUNCTION</scope>
    <scope>CATALYTIC ACTIVITY</scope>
    <scope>BIOPHYSICOCHEMICAL PROPERTIES</scope>
    <scope>TISSUE SPECIFICITY</scope>
    <scope>DEVELOPMENTAL STAGE</scope>
    <scope>DISRUPTION PHENOTYPE</scope>
</reference>
<reference key="2">
    <citation type="journal article" date="1998" name="Science">
        <title>Genome sequence of the nematode C. elegans: a platform for investigating biology.</title>
        <authorList>
            <consortium name="The C. elegans sequencing consortium"/>
        </authorList>
    </citation>
    <scope>NUCLEOTIDE SEQUENCE [LARGE SCALE GENOMIC DNA]</scope>
    <source>
        <strain>Bristol N2</strain>
    </source>
</reference>
<reference key="3">
    <citation type="journal article" date="2003" name="Nat. Biotechnol.">
        <title>Lectin affinity capture, isotope-coded tagging and mass spectrometry to identify N-linked glycoproteins.</title>
        <authorList>
            <person name="Kaji H."/>
            <person name="Saito H."/>
            <person name="Yamauchi Y."/>
            <person name="Shinkawa T."/>
            <person name="Taoka M."/>
            <person name="Hirabayashi J."/>
            <person name="Kasai K."/>
            <person name="Takahashi N."/>
            <person name="Isobe T."/>
        </authorList>
    </citation>
    <scope>GLYCOSYLATION [LARGE SCALE ANALYSIS] AT ASN-351 AND ASN-460</scope>
    <scope>IDENTIFICATION BY MASS SPECTROMETRY</scope>
    <source>
        <strain>Bristol N2</strain>
    </source>
</reference>
<reference key="4">
    <citation type="journal article" date="2005" name="Glycobiology">
        <title>Identification of the hydrophobic glycoproteins of Caenorhabditis elegans.</title>
        <authorList>
            <person name="Fan X."/>
            <person name="She Y.-M."/>
            <person name="Bagshaw R.D."/>
            <person name="Callahan J.W."/>
            <person name="Schachter H."/>
            <person name="Mahuran D.J."/>
        </authorList>
    </citation>
    <scope>GLYCOSYLATION [LARGE SCALE ANALYSIS] AT ASN-351</scope>
    <scope>IDENTIFICATION BY MASS SPECTROMETRY</scope>
</reference>
<reference key="5">
    <citation type="journal article" date="2007" name="Mol. Cell. Proteomics">
        <title>Proteomics reveals N-linked glycoprotein diversity in Caenorhabditis elegans and suggests an atypical translocation mechanism for integral membrane proteins.</title>
        <authorList>
            <person name="Kaji H."/>
            <person name="Kamiie J."/>
            <person name="Kawakami H."/>
            <person name="Kido K."/>
            <person name="Yamauchi Y."/>
            <person name="Shinkawa T."/>
            <person name="Taoka M."/>
            <person name="Takahashi N."/>
            <person name="Isobe T."/>
        </authorList>
    </citation>
    <scope>GLYCOSYLATION [LARGE SCALE ANALYSIS] AT ASN-351 AND ASN-460</scope>
    <scope>IDENTIFICATION BY MASS SPECTROMETRY</scope>
    <source>
        <strain>Bristol N2</strain>
    </source>
</reference>
<organism>
    <name type="scientific">Caenorhabditis elegans</name>
    <dbReference type="NCBI Taxonomy" id="6239"/>
    <lineage>
        <taxon>Eukaryota</taxon>
        <taxon>Metazoa</taxon>
        <taxon>Ecdysozoa</taxon>
        <taxon>Nematoda</taxon>
        <taxon>Chromadorea</taxon>
        <taxon>Rhabditida</taxon>
        <taxon>Rhabditina</taxon>
        <taxon>Rhabditomorpha</taxon>
        <taxon>Rhabditoidea</taxon>
        <taxon>Rhabditidae</taxon>
        <taxon>Peloderinae</taxon>
        <taxon>Caenorhabditis</taxon>
    </lineage>
</organism>
<proteinExistence type="evidence at protein level"/>
<feature type="signal peptide" evidence="2">
    <location>
        <begin position="1"/>
        <end position="18"/>
    </location>
</feature>
<feature type="chain" id="PRO_0000012009" description="Beta-hexosaminidase A">
    <location>
        <begin position="19"/>
        <end position="555"/>
    </location>
</feature>
<feature type="active site" description="Proton donor" evidence="1">
    <location>
        <position position="325"/>
    </location>
</feature>
<feature type="glycosylation site" description="N-linked (GlcNAc...) asparagine" evidence="2">
    <location>
        <position position="47"/>
    </location>
</feature>
<feature type="glycosylation site" description="N-linked (GlcNAc...) asparagine" evidence="3 4 6">
    <location>
        <position position="351"/>
    </location>
</feature>
<feature type="glycosylation site" description="N-linked (GlcNAc...) asparagine" evidence="2">
    <location>
        <position position="412"/>
    </location>
</feature>
<feature type="glycosylation site" description="N-linked (GlcNAc...) asparagine" evidence="3 6">
    <location>
        <position position="460"/>
    </location>
</feature>
<comment type="function">
    <text evidence="5">Responsible for the degradation of GM2 gangliosides, and a variety of other molecules containing terminal N-acetyl hexosamines. Degrades chitotriose.</text>
</comment>
<comment type="catalytic activity">
    <reaction evidence="5">
        <text>Hydrolysis of terminal non-reducing N-acetyl-D-hexosamine residues in N-acetyl-beta-D-hexosaminides.</text>
        <dbReference type="EC" id="3.2.1.52"/>
    </reaction>
</comment>
<comment type="biophysicochemical properties">
    <kinetics>
        <KM evidence="5">1.1 mM for p-nitrophenyl-beta-N-acetylglucosaminide</KM>
    </kinetics>
    <phDependence>
        <text evidence="5">Optimum pH is 5.5.</text>
    </phDependence>
</comment>
<comment type="subcellular location">
    <subcellularLocation>
        <location evidence="7">Lysosome</location>
    </subcellularLocation>
</comment>
<comment type="tissue specificity">
    <text evidence="5">Expressed in coelomocytes and neurons of the pharyngeal region and nerve cord.</text>
</comment>
<comment type="developmental stage">
    <text evidence="5">Expressed throughout the life cycle.</text>
</comment>
<comment type="disruption phenotype">
    <text evidence="5">Worms show reduced degradation of p-nitrophenyl-beta-N-acetylglucosaminide and no chitotriosidase activity.</text>
</comment>
<comment type="similarity">
    <text evidence="7">Belongs to the glycosyl hydrolase 20 family.</text>
</comment>
<gene>
    <name type="primary">hex-1</name>
    <name type="ORF">T14F9.3</name>
</gene>
<sequence length="555" mass="64379">MRLLIPILIFALITTAVTWFYGRDDPDRWSVGGVWPLPKKIVYGSKNRTITYDKIGIDLGDKKDCDILLSMADNYMNKWLFPFPVEMKTGGTEDFIITVTVKDECPSGPPVHGASEEYLLRVSLTEAVINAQTVWGALRAMESLSHLVFYDHKSQEYQIRTVEIFDKPRFPVRGIMIDSSRHFLSVNVIKRQLEIMSMNKLNVLHWHLVDSESFPYTSVKFPELHGVGAYSPRHVYSREDIADVIAFARLRGIRVIPEFDLPGHTSSWRGRKGFLTECFDEKGVETFLPNLVDPMNEANFDFISEFLEEVTETFPDQFLHLGGDEVSDYIVECWERNKKIRKFMEEKGFGNDTVLLENYFFEKLYKIVENLKLKRKPIFWQEVFDNNIPDPNAVIHIWKGNTHEEIYEQVKNITSQNFPVIVSACWYLNYIKYGADWRDEIRGTAPSNSRYYYCDPTNFNGTVAQKELVWGGIAAIWGELVDNTNIEARLWPRASAAAERLWSPAEKTQRAEDAWPRMHELRCRLVSRGYRIQPNNNPDYCPFEFDEPPATKTEL</sequence>
<accession>Q22492</accession>
<accession>A7DY65</accession>
<evidence type="ECO:0000250" key="1"/>
<evidence type="ECO:0000255" key="2"/>
<evidence type="ECO:0000269" key="3">
    <source>
    </source>
</evidence>
<evidence type="ECO:0000269" key="4">
    <source>
    </source>
</evidence>
<evidence type="ECO:0000269" key="5">
    <source>
    </source>
</evidence>
<evidence type="ECO:0000269" key="6">
    <source>
    </source>
</evidence>
<evidence type="ECO:0000305" key="7"/>
<protein>
    <recommendedName>
        <fullName>Beta-hexosaminidase A</fullName>
        <ecNumber>3.2.1.52</ecNumber>
    </recommendedName>
    <alternativeName>
        <fullName>Beta-N-acetylhexosaminidase</fullName>
    </alternativeName>
    <alternativeName>
        <fullName>N-acetyl-beta-glucosaminidase</fullName>
    </alternativeName>
</protein>
<dbReference type="EC" id="3.2.1.52"/>
<dbReference type="EMBL" id="AM748820">
    <property type="protein sequence ID" value="CAO72174.1"/>
    <property type="molecule type" value="mRNA"/>
</dbReference>
<dbReference type="EMBL" id="FO081076">
    <property type="protein sequence ID" value="CCD68941.1"/>
    <property type="molecule type" value="Genomic_DNA"/>
</dbReference>
<dbReference type="PIR" id="T29377">
    <property type="entry name" value="T29377"/>
</dbReference>
<dbReference type="RefSeq" id="NP_508409.1">
    <property type="nucleotide sequence ID" value="NM_076008.8"/>
</dbReference>
<dbReference type="SMR" id="Q22492"/>
<dbReference type="FunCoup" id="Q22492">
    <property type="interactions" value="967"/>
</dbReference>
<dbReference type="STRING" id="6239.T14F9.3.1"/>
<dbReference type="CAZy" id="GH20">
    <property type="family name" value="Glycoside Hydrolase Family 20"/>
</dbReference>
<dbReference type="GlyCosmos" id="Q22492">
    <property type="glycosylation" value="4 sites, No reported glycans"/>
</dbReference>
<dbReference type="iPTMnet" id="Q22492"/>
<dbReference type="PaxDb" id="6239-T14F9.3"/>
<dbReference type="PeptideAtlas" id="Q22492"/>
<dbReference type="EnsemblMetazoa" id="T14F9.3.1">
    <property type="protein sequence ID" value="T14F9.3.1"/>
    <property type="gene ID" value="WBGene00020509"/>
</dbReference>
<dbReference type="EnsemblMetazoa" id="T14F9.3.2">
    <property type="protein sequence ID" value="T14F9.3.2"/>
    <property type="gene ID" value="WBGene00020509"/>
</dbReference>
<dbReference type="GeneID" id="180533"/>
<dbReference type="KEGG" id="cel:CELE_T14F9.3"/>
<dbReference type="UCSC" id="T14F9.3">
    <property type="organism name" value="c. elegans"/>
</dbReference>
<dbReference type="AGR" id="WB:WBGene00020509"/>
<dbReference type="CTD" id="180533"/>
<dbReference type="WormBase" id="T14F9.3">
    <property type="protein sequence ID" value="CE07499"/>
    <property type="gene ID" value="WBGene00020509"/>
    <property type="gene designation" value="hex-1"/>
</dbReference>
<dbReference type="eggNOG" id="KOG2499">
    <property type="taxonomic scope" value="Eukaryota"/>
</dbReference>
<dbReference type="GeneTree" id="ENSGT00390000008107"/>
<dbReference type="HOGENOM" id="CLU_007082_0_2_1"/>
<dbReference type="InParanoid" id="Q22492"/>
<dbReference type="OMA" id="KMWPRAA"/>
<dbReference type="OrthoDB" id="428480at2759"/>
<dbReference type="PhylomeDB" id="Q22492"/>
<dbReference type="BRENDA" id="3.2.1.52">
    <property type="organism ID" value="1045"/>
</dbReference>
<dbReference type="Reactome" id="R-CEL-2022857">
    <property type="pathway name" value="Keratan sulfate degradation"/>
</dbReference>
<dbReference type="Reactome" id="R-CEL-2024101">
    <property type="pathway name" value="CS/DS degradation"/>
</dbReference>
<dbReference type="Reactome" id="R-CEL-2160916">
    <property type="pathway name" value="Hyaluronan uptake and degradation"/>
</dbReference>
<dbReference type="Reactome" id="R-CEL-6798695">
    <property type="pathway name" value="Neutrophil degranulation"/>
</dbReference>
<dbReference type="Reactome" id="R-CEL-9840310">
    <property type="pathway name" value="Glycosphingolipid catabolism"/>
</dbReference>
<dbReference type="SABIO-RK" id="Q22492"/>
<dbReference type="PRO" id="PR:Q22492"/>
<dbReference type="Proteomes" id="UP000001940">
    <property type="component" value="Chromosome X"/>
</dbReference>
<dbReference type="Bgee" id="WBGene00020509">
    <property type="expression patterns" value="Expressed in material anatomical entity and 5 other cell types or tissues"/>
</dbReference>
<dbReference type="GO" id="GO:0005764">
    <property type="term" value="C:lysosome"/>
    <property type="evidence" value="ECO:0000318"/>
    <property type="project" value="GO_Central"/>
</dbReference>
<dbReference type="GO" id="GO:0016020">
    <property type="term" value="C:membrane"/>
    <property type="evidence" value="ECO:0000318"/>
    <property type="project" value="GO_Central"/>
</dbReference>
<dbReference type="GO" id="GO:0004563">
    <property type="term" value="F:beta-N-acetylhexosaminidase activity"/>
    <property type="evidence" value="ECO:0000314"/>
    <property type="project" value="UniProtKB"/>
</dbReference>
<dbReference type="GO" id="GO:0015929">
    <property type="term" value="F:hexosaminidase activity"/>
    <property type="evidence" value="ECO:0000314"/>
    <property type="project" value="WormBase"/>
</dbReference>
<dbReference type="GO" id="GO:0005975">
    <property type="term" value="P:carbohydrate metabolic process"/>
    <property type="evidence" value="ECO:0000314"/>
    <property type="project" value="UniProtKB"/>
</dbReference>
<dbReference type="GO" id="GO:0030203">
    <property type="term" value="P:glycosaminoglycan metabolic process"/>
    <property type="evidence" value="ECO:0000318"/>
    <property type="project" value="GO_Central"/>
</dbReference>
<dbReference type="GO" id="GO:0006491">
    <property type="term" value="P:N-glycan processing"/>
    <property type="evidence" value="ECO:0000318"/>
    <property type="project" value="GO_Central"/>
</dbReference>
<dbReference type="CDD" id="cd06562">
    <property type="entry name" value="GH20_HexA_HexB-like"/>
    <property type="match status" value="1"/>
</dbReference>
<dbReference type="FunFam" id="3.20.20.80:FF:000063">
    <property type="entry name" value="Beta-hexosaminidase"/>
    <property type="match status" value="1"/>
</dbReference>
<dbReference type="Gene3D" id="3.30.379.10">
    <property type="entry name" value="Chitobiase/beta-hexosaminidase domain 2-like"/>
    <property type="match status" value="1"/>
</dbReference>
<dbReference type="Gene3D" id="3.20.20.80">
    <property type="entry name" value="Glycosidases"/>
    <property type="match status" value="1"/>
</dbReference>
<dbReference type="InterPro" id="IPR025705">
    <property type="entry name" value="Beta_hexosaminidase_sua/sub"/>
</dbReference>
<dbReference type="InterPro" id="IPR015883">
    <property type="entry name" value="Glyco_hydro_20_cat"/>
</dbReference>
<dbReference type="InterPro" id="IPR017853">
    <property type="entry name" value="Glycoside_hydrolase_SF"/>
</dbReference>
<dbReference type="InterPro" id="IPR029018">
    <property type="entry name" value="Hex-like_dom2"/>
</dbReference>
<dbReference type="InterPro" id="IPR029019">
    <property type="entry name" value="HEX_eukaryotic_N"/>
</dbReference>
<dbReference type="PANTHER" id="PTHR22600">
    <property type="entry name" value="BETA-HEXOSAMINIDASE"/>
    <property type="match status" value="1"/>
</dbReference>
<dbReference type="PANTHER" id="PTHR22600:SF21">
    <property type="entry name" value="BETA-HEXOSAMINIDASE A"/>
    <property type="match status" value="1"/>
</dbReference>
<dbReference type="Pfam" id="PF00728">
    <property type="entry name" value="Glyco_hydro_20"/>
    <property type="match status" value="1"/>
</dbReference>
<dbReference type="Pfam" id="PF14845">
    <property type="entry name" value="Glycohydro_20b2"/>
    <property type="match status" value="1"/>
</dbReference>
<dbReference type="PIRSF" id="PIRSF001093">
    <property type="entry name" value="B-hxosamndse_ab_euk"/>
    <property type="match status" value="1"/>
</dbReference>
<dbReference type="PRINTS" id="PR00738">
    <property type="entry name" value="GLHYDRLASE20"/>
</dbReference>
<dbReference type="SUPFAM" id="SSF51445">
    <property type="entry name" value="(Trans)glycosidases"/>
    <property type="match status" value="1"/>
</dbReference>
<dbReference type="SUPFAM" id="SSF55545">
    <property type="entry name" value="beta-N-acetylhexosaminidase-like domain"/>
    <property type="match status" value="1"/>
</dbReference>